<proteinExistence type="inferred from homology"/>
<reference key="1">
    <citation type="submission" date="1997-08" db="EMBL/GenBank/DDBJ databases">
        <title>Rice ragged stunt oryzavirus:complete sequence and genome organization.</title>
        <authorList>
            <person name="Upadhyaya N.M."/>
            <person name="Li Z."/>
            <person name="Ramm K."/>
            <person name="Yang M."/>
            <person name="Gellatly J.A."/>
            <person name="Kositratana W."/>
            <person name="Gerlach W.L."/>
            <person name="Waterhouse P.M."/>
        </authorList>
    </citation>
    <scope>NUCLEOTIDE SEQUENCE [GENOMIC RNA]</scope>
</reference>
<gene>
    <name type="primary">S2</name>
</gene>
<protein>
    <recommendedName>
        <fullName>Outer capsid protein VP2</fullName>
    </recommendedName>
    <domain>
        <recommendedName>
            <fullName>mRNA guanylyltransferase</fullName>
            <ecNumber>2.7.7.50</ecNumber>
        </recommendedName>
    </domain>
    <domain>
        <recommendedName>
            <fullName>mRNA (guanine-N(7))-methyltransferase</fullName>
            <ecNumber>2.1.1.56</ecNumber>
        </recommendedName>
    </domain>
</protein>
<comment type="function">
    <text evidence="1">Outer capsid protein involved in mRNA capping. Catalyzes the last 3 enzymatic activities for formation of the 5' cap structure on the viral plus-strand transcripts, namely the RNA guanylyltransferase, RNA-7N- and RNA-2'O-methyltransferase activities (By similarity).</text>
</comment>
<comment type="catalytic activity">
    <reaction>
        <text>a 5'-end diphospho-ribonucleoside in mRNA + GTP + H(+) = a 5'-end (5'-triphosphoguanosine)-ribonucleoside in mRNA + diphosphate</text>
        <dbReference type="Rhea" id="RHEA:67012"/>
        <dbReference type="Rhea" id="RHEA-COMP:17165"/>
        <dbReference type="Rhea" id="RHEA-COMP:17166"/>
        <dbReference type="ChEBI" id="CHEBI:15378"/>
        <dbReference type="ChEBI" id="CHEBI:33019"/>
        <dbReference type="ChEBI" id="CHEBI:37565"/>
        <dbReference type="ChEBI" id="CHEBI:167616"/>
        <dbReference type="ChEBI" id="CHEBI:167617"/>
        <dbReference type="EC" id="2.7.7.50"/>
    </reaction>
</comment>
<comment type="catalytic activity">
    <reaction>
        <text>a 5'-end (5'-triphosphoguanosine)-ribonucleoside in mRNA + S-adenosyl-L-methionine = a 5'-end (N(7)-methyl 5'-triphosphoguanosine)-ribonucleoside in mRNA + S-adenosyl-L-homocysteine</text>
        <dbReference type="Rhea" id="RHEA:67008"/>
        <dbReference type="Rhea" id="RHEA-COMP:17166"/>
        <dbReference type="Rhea" id="RHEA-COMP:17167"/>
        <dbReference type="ChEBI" id="CHEBI:57856"/>
        <dbReference type="ChEBI" id="CHEBI:59789"/>
        <dbReference type="ChEBI" id="CHEBI:156461"/>
        <dbReference type="ChEBI" id="CHEBI:167617"/>
        <dbReference type="EC" id="2.1.1.56"/>
    </reaction>
</comment>
<comment type="subcellular location">
    <subcellularLocation>
        <location evidence="3">Virion</location>
    </subcellularLocation>
</comment>
<sequence length="1192" mass="133081">MTEYTNLPVKWTNGIVISDERMMLDPLPSEVSAVLDAPINYSYRYNELRRTHSLKLFGVWSGYIPSHADKHLMIFQLLQQEKELTGDEIRLALRQMQGSIKLPINDKLLDSLDRYSLIFAWIAYAGCLDSAFWQQVCADPKCLVYNPDDNLKFSLMFSLARQYSATTRICSADGLRIPSQISPDLGQLAFDLVFNSSVRQTVWFHANDFPAFDFYTKDVGTMVTFHVNFLYNMTHCVPFKTKQSCAEYLIQKAHEAWSVYCGVLNDTIRHRLRLVEGVGIVTLDVDLQILAAVGWYLPLLVYTIRSVSGSDISEWLNVARREFRDLNCSSMINGEGYVGVPEQFWTIHATSKARMWPRVKKYTCDLTDLYNGDLSSTVLGEGASETGTVKWFDVPLGPKVENFRVVGTRIGALSRANVIYNYEDPSDNCDLARAIGSFVPSLPTSGTRDTNGDLEDAKKMFDYRVSQNVYSICQKGKISSLVSRSVKNLRASLMNGELRVYKGSRLWALRAMLFSDKLRYKSDGQVIDPYESHRGKITVRLNNSSLKMLSAFVTLIELAMAQSSGVEDNMLNGRGLSPLQVRSDREVSRVVIAGAINEPLVGCLRRMYPKLSVIGFGMDAVGENERLTVEGASQRNLACDMLISDIDQTFYSDFTKMCNVTVKHALAFSSWSDYVLMKVNYPSSHLLNEIKQALLSRGFSRIVLPVVMCGQNSFTSEVFVYIGRAGVGGHVDFKNNWFTKNDILMRRYRHMKAPLITIPQVVHSVVSKCVTKHDTELFANPGSIVALTVEYASAREVVSLISEVCSPVWTWRTGAGANKFVNIVGMPSKARAALTRRTDEHYYLKAFERNIVGTSFGMYKGIPRIDALNCVSWVTIFGAAMRECLYWIVDTLKVQYNEVISIGARNMTDIEFIKPSVKLTCYDEYYANPQDLATHYNVNYENKYFNWLSPTLVNDSVYVANFVIMAPTEGSESPSATEQLDRIDSVAGAMAKSSITRMTFVGNLYDSRFLADIALSSLPPEGLKVNDTRTTVQIGKYPPCAAVKPSAFLERMKKYKGVLSYHVYPLGYDRVLKTCADNLWIPDVAGSPMLAFCQGLSYAFYITKPAIPDEGIDQFMLDDMPDDGSGSVTPTQSPSPSPSPSAAANTEASTVVEPIDNLNVVSPTVPGQPSQTPVNPNQSTELQSVAKPGIVR</sequence>
<evidence type="ECO:0000250" key="1"/>
<evidence type="ECO:0000256" key="2">
    <source>
        <dbReference type="SAM" id="MobiDB-lite"/>
    </source>
</evidence>
<evidence type="ECO:0000305" key="3"/>
<accession>O56043</accession>
<dbReference type="EC" id="2.7.7.50"/>
<dbReference type="EC" id="2.1.1.56"/>
<dbReference type="EMBL" id="AF020335">
    <property type="protein sequence ID" value="AAC04673.1"/>
    <property type="molecule type" value="Genomic_RNA"/>
</dbReference>
<dbReference type="PIR" id="T08609">
    <property type="entry name" value="T08609"/>
</dbReference>
<dbReference type="RefSeq" id="NP_620515.1">
    <property type="nucleotide sequence ID" value="NC_003750.1"/>
</dbReference>
<dbReference type="SMR" id="O56043"/>
<dbReference type="KEGG" id="vg:991196"/>
<dbReference type="Proteomes" id="UP000000348">
    <property type="component" value="Genome"/>
</dbReference>
<dbReference type="GO" id="GO:0039625">
    <property type="term" value="C:viral inner capsid"/>
    <property type="evidence" value="ECO:0007669"/>
    <property type="project" value="UniProtKB-KW"/>
</dbReference>
<dbReference type="GO" id="GO:0005524">
    <property type="term" value="F:ATP binding"/>
    <property type="evidence" value="ECO:0007669"/>
    <property type="project" value="UniProtKB-KW"/>
</dbReference>
<dbReference type="GO" id="GO:0005525">
    <property type="term" value="F:GTP binding"/>
    <property type="evidence" value="ECO:0007669"/>
    <property type="project" value="UniProtKB-KW"/>
</dbReference>
<dbReference type="GO" id="GO:0004482">
    <property type="term" value="F:mRNA 5'-cap (guanine-N7-)-methyltransferase activity"/>
    <property type="evidence" value="ECO:0007669"/>
    <property type="project" value="UniProtKB-EC"/>
</dbReference>
<dbReference type="GO" id="GO:0004484">
    <property type="term" value="F:mRNA guanylyltransferase activity"/>
    <property type="evidence" value="ECO:0007669"/>
    <property type="project" value="UniProtKB-EC"/>
</dbReference>
<dbReference type="InterPro" id="IPR048608">
    <property type="entry name" value="Reov_VP3_GTase"/>
</dbReference>
<dbReference type="InterPro" id="IPR048607">
    <property type="entry name" value="Reov_VP3_MTase1"/>
</dbReference>
<dbReference type="InterPro" id="IPR048606">
    <property type="entry name" value="Reov_VP3_MTase2"/>
</dbReference>
<dbReference type="Pfam" id="PF20790">
    <property type="entry name" value="Reov_VP3_GTase"/>
    <property type="match status" value="1"/>
</dbReference>
<dbReference type="Pfam" id="PF20831">
    <property type="entry name" value="Reov_VP3_MTase1"/>
    <property type="match status" value="1"/>
</dbReference>
<dbReference type="Pfam" id="PF20832">
    <property type="entry name" value="Reov_VP3_MTase2"/>
    <property type="match status" value="1"/>
</dbReference>
<organism>
    <name type="scientific">Rice ragged stunt virus (isolate Thailand)</name>
    <name type="common">RRSV</name>
    <dbReference type="NCBI Taxonomy" id="649603"/>
    <lineage>
        <taxon>Viruses</taxon>
        <taxon>Riboviria</taxon>
        <taxon>Orthornavirae</taxon>
        <taxon>Duplornaviricota</taxon>
        <taxon>Resentoviricetes</taxon>
        <taxon>Reovirales</taxon>
        <taxon>Spinareoviridae</taxon>
        <taxon>Oryzavirus</taxon>
        <taxon>Rice ragged stunt virus</taxon>
    </lineage>
</organism>
<keyword id="KW-0067">ATP-binding</keyword>
<keyword id="KW-0167">Capsid protein</keyword>
<keyword id="KW-0342">GTP-binding</keyword>
<keyword id="KW-1153">Inner capsid protein</keyword>
<keyword id="KW-0489">Methyltransferase</keyword>
<keyword id="KW-0506">mRNA capping</keyword>
<keyword id="KW-0507">mRNA processing</keyword>
<keyword id="KW-0511">Multifunctional enzyme</keyword>
<keyword id="KW-0547">Nucleotide-binding</keyword>
<keyword id="KW-0548">Nucleotidyltransferase</keyword>
<keyword id="KW-1185">Reference proteome</keyword>
<keyword id="KW-0949">S-adenosyl-L-methionine</keyword>
<keyword id="KW-0808">Transferase</keyword>
<keyword id="KW-0946">Virion</keyword>
<feature type="chain" id="PRO_0000403635" description="Outer capsid protein VP2">
    <location>
        <begin position="1"/>
        <end position="1192"/>
    </location>
</feature>
<feature type="region of interest" description="Disordered" evidence="2">
    <location>
        <begin position="1112"/>
        <end position="1192"/>
    </location>
</feature>
<feature type="compositionally biased region" description="Low complexity" evidence="2">
    <location>
        <begin position="1140"/>
        <end position="1150"/>
    </location>
</feature>
<feature type="compositionally biased region" description="Polar residues" evidence="2">
    <location>
        <begin position="1159"/>
        <end position="1183"/>
    </location>
</feature>
<organismHost>
    <name type="scientific">Oryza latifolia</name>
    <dbReference type="NCBI Taxonomy" id="4534"/>
</organismHost>
<organismHost>
    <name type="scientific">Oryza nivara</name>
    <name type="common">Indian wild rice</name>
    <name type="synonym">Oryza sativa f. spontanea</name>
    <dbReference type="NCBI Taxonomy" id="4536"/>
</organismHost>
<organismHost>
    <name type="scientific">Oryza rufipogon</name>
    <name type="common">Brownbeard rice</name>
    <name type="synonym">Asian wild rice</name>
    <dbReference type="NCBI Taxonomy" id="4529"/>
</organismHost>
<name>VP2_RRSVT</name>